<reference key="1">
    <citation type="submission" date="1997-08" db="EMBL/GenBank/DDBJ databases">
        <title>PetA from Picea abies.</title>
        <authorList>
            <person name="Philipps A."/>
            <person name="Sutter A."/>
            <person name="Wild A."/>
        </authorList>
    </citation>
    <scope>NUCLEOTIDE SEQUENCE [GENOMIC DNA]</scope>
</reference>
<accession>O47042</accession>
<name>CYF_PICAB</name>
<evidence type="ECO:0000250" key="1"/>
<evidence type="ECO:0000255" key="2"/>
<evidence type="ECO:0000305" key="3"/>
<keyword id="KW-0150">Chloroplast</keyword>
<keyword id="KW-0249">Electron transport</keyword>
<keyword id="KW-0349">Heme</keyword>
<keyword id="KW-0408">Iron</keyword>
<keyword id="KW-0472">Membrane</keyword>
<keyword id="KW-0479">Metal-binding</keyword>
<keyword id="KW-0602">Photosynthesis</keyword>
<keyword id="KW-0934">Plastid</keyword>
<keyword id="KW-0732">Signal</keyword>
<keyword id="KW-0793">Thylakoid</keyword>
<keyword id="KW-0812">Transmembrane</keyword>
<keyword id="KW-1133">Transmembrane helix</keyword>
<keyword id="KW-0813">Transport</keyword>
<geneLocation type="chloroplast"/>
<gene>
    <name type="primary">petA</name>
</gene>
<organism>
    <name type="scientific">Picea abies</name>
    <name type="common">Norway spruce</name>
    <name type="synonym">Picea excelsa</name>
    <dbReference type="NCBI Taxonomy" id="3329"/>
    <lineage>
        <taxon>Eukaryota</taxon>
        <taxon>Viridiplantae</taxon>
        <taxon>Streptophyta</taxon>
        <taxon>Embryophyta</taxon>
        <taxon>Tracheophyta</taxon>
        <taxon>Spermatophyta</taxon>
        <taxon>Pinopsida</taxon>
        <taxon>Pinidae</taxon>
        <taxon>Conifers I</taxon>
        <taxon>Pinales</taxon>
        <taxon>Pinaceae</taxon>
        <taxon>Picea</taxon>
    </lineage>
</organism>
<protein>
    <recommendedName>
        <fullName>Cytochrome f</fullName>
    </recommendedName>
</protein>
<feature type="signal peptide" evidence="1">
    <location>
        <begin position="1"/>
        <end position="34"/>
    </location>
</feature>
<feature type="chain" id="PRO_0000023830" description="Cytochrome f">
    <location>
        <begin position="35"/>
        <end position="319"/>
    </location>
</feature>
<feature type="transmembrane region" description="Helical" evidence="2">
    <location>
        <begin position="285"/>
        <end position="304"/>
    </location>
</feature>
<feature type="binding site" description="axial binding residue" evidence="1">
    <location>
        <position position="35"/>
    </location>
    <ligand>
        <name>heme</name>
        <dbReference type="ChEBI" id="CHEBI:30413"/>
    </ligand>
    <ligandPart>
        <name>Fe</name>
        <dbReference type="ChEBI" id="CHEBI:18248"/>
    </ligandPart>
</feature>
<feature type="binding site" description="covalent" evidence="1">
    <location>
        <position position="55"/>
    </location>
    <ligand>
        <name>heme</name>
        <dbReference type="ChEBI" id="CHEBI:30413"/>
    </ligand>
</feature>
<feature type="binding site" description="covalent" evidence="1">
    <location>
        <position position="58"/>
    </location>
    <ligand>
        <name>heme</name>
        <dbReference type="ChEBI" id="CHEBI:30413"/>
    </ligand>
</feature>
<feature type="binding site" description="axial binding residue" evidence="1">
    <location>
        <position position="59"/>
    </location>
    <ligand>
        <name>heme</name>
        <dbReference type="ChEBI" id="CHEBI:30413"/>
    </ligand>
    <ligandPart>
        <name>Fe</name>
        <dbReference type="ChEBI" id="CHEBI:18248"/>
    </ligandPart>
</feature>
<proteinExistence type="inferred from homology"/>
<dbReference type="EMBL" id="AJ001023">
    <property type="protein sequence ID" value="CAA04479.1"/>
    <property type="molecule type" value="Genomic_DNA"/>
</dbReference>
<dbReference type="PIR" id="T14833">
    <property type="entry name" value="T14833"/>
</dbReference>
<dbReference type="SMR" id="O47042"/>
<dbReference type="GO" id="GO:0009535">
    <property type="term" value="C:chloroplast thylakoid membrane"/>
    <property type="evidence" value="ECO:0007669"/>
    <property type="project" value="UniProtKB-SubCell"/>
</dbReference>
<dbReference type="GO" id="GO:0009055">
    <property type="term" value="F:electron transfer activity"/>
    <property type="evidence" value="ECO:0007669"/>
    <property type="project" value="UniProtKB-UniRule"/>
</dbReference>
<dbReference type="GO" id="GO:0020037">
    <property type="term" value="F:heme binding"/>
    <property type="evidence" value="ECO:0007669"/>
    <property type="project" value="InterPro"/>
</dbReference>
<dbReference type="GO" id="GO:0005506">
    <property type="term" value="F:iron ion binding"/>
    <property type="evidence" value="ECO:0007669"/>
    <property type="project" value="InterPro"/>
</dbReference>
<dbReference type="GO" id="GO:0015979">
    <property type="term" value="P:photosynthesis"/>
    <property type="evidence" value="ECO:0007669"/>
    <property type="project" value="UniProtKB-UniRule"/>
</dbReference>
<dbReference type="FunFam" id="1.20.5.700:FF:000001">
    <property type="entry name" value="Cytochrome f"/>
    <property type="match status" value="1"/>
</dbReference>
<dbReference type="FunFam" id="2.40.50.100:FF:000007">
    <property type="entry name" value="Cytochrome f"/>
    <property type="match status" value="1"/>
</dbReference>
<dbReference type="FunFam" id="2.60.40.830:FF:000001">
    <property type="entry name" value="Cytochrome f"/>
    <property type="match status" value="1"/>
</dbReference>
<dbReference type="Gene3D" id="2.40.50.100">
    <property type="match status" value="1"/>
</dbReference>
<dbReference type="Gene3D" id="2.60.40.830">
    <property type="entry name" value="Cytochrome f large domain"/>
    <property type="match status" value="1"/>
</dbReference>
<dbReference type="Gene3D" id="1.20.5.700">
    <property type="entry name" value="Single helix bin"/>
    <property type="match status" value="1"/>
</dbReference>
<dbReference type="HAMAP" id="MF_00610">
    <property type="entry name" value="Cytb6_f_cytF"/>
    <property type="match status" value="1"/>
</dbReference>
<dbReference type="InterPro" id="IPR024058">
    <property type="entry name" value="Cyt-f_TM"/>
</dbReference>
<dbReference type="InterPro" id="IPR002325">
    <property type="entry name" value="Cyt_f"/>
</dbReference>
<dbReference type="InterPro" id="IPR024094">
    <property type="entry name" value="Cyt_f_lg_dom"/>
</dbReference>
<dbReference type="InterPro" id="IPR036826">
    <property type="entry name" value="Cyt_f_lg_dom_sf"/>
</dbReference>
<dbReference type="InterPro" id="IPR011054">
    <property type="entry name" value="Rudment_hybrid_motif"/>
</dbReference>
<dbReference type="PANTHER" id="PTHR33288">
    <property type="match status" value="1"/>
</dbReference>
<dbReference type="PANTHER" id="PTHR33288:SF10">
    <property type="entry name" value="CYTOCHROME F"/>
    <property type="match status" value="1"/>
</dbReference>
<dbReference type="Pfam" id="PF01333">
    <property type="entry name" value="Apocytochr_F_C"/>
    <property type="match status" value="1"/>
</dbReference>
<dbReference type="Pfam" id="PF16639">
    <property type="entry name" value="Apocytochr_F_N"/>
    <property type="match status" value="1"/>
</dbReference>
<dbReference type="PRINTS" id="PR00610">
    <property type="entry name" value="CYTOCHROMEF"/>
</dbReference>
<dbReference type="SUPFAM" id="SSF103431">
    <property type="entry name" value="Cytochrome f subunit of the cytochrome b6f complex, transmembrane anchor"/>
    <property type="match status" value="1"/>
</dbReference>
<dbReference type="SUPFAM" id="SSF49441">
    <property type="entry name" value="Cytochrome f, large domain"/>
    <property type="match status" value="1"/>
</dbReference>
<dbReference type="SUPFAM" id="SSF51246">
    <property type="entry name" value="Rudiment single hybrid motif"/>
    <property type="match status" value="1"/>
</dbReference>
<dbReference type="PROSITE" id="PS51010">
    <property type="entry name" value="CYTF"/>
    <property type="match status" value="1"/>
</dbReference>
<comment type="function">
    <text evidence="1">Component of the cytochrome b6-f complex, which mediates electron transfer between photosystem II (PSII) and photosystem I (PSI), cyclic electron flow around PSI, and state transitions.</text>
</comment>
<comment type="cofactor">
    <cofactor evidence="1">
        <name>heme</name>
        <dbReference type="ChEBI" id="CHEBI:30413"/>
    </cofactor>
    <text evidence="1">Binds 1 heme group covalently.</text>
</comment>
<comment type="subunit">
    <text evidence="1">The 4 large subunits of the cytochrome b6-f complex are cytochrome b6, subunit IV (17 kDa polypeptide, petD), cytochrome f and the Rieske protein, while the 4 small subunits are PetG, PetL, PetM and PetN. The complex functions as a dimer (By similarity).</text>
</comment>
<comment type="subcellular location">
    <subcellularLocation>
        <location evidence="1">Plastid</location>
        <location evidence="1">Chloroplast thylakoid membrane</location>
        <topology evidence="1">Single-pass membrane protein</topology>
    </subcellularLocation>
</comment>
<comment type="similarity">
    <text evidence="3">Belongs to the cytochrome f family.</text>
</comment>
<sequence length="319" mass="35151">MQNRNTYDLKKKMTRLISVLVMIHIITRTSISNAYPIFAQQGYENPREATGRIVCANCHLAKKPVDIEGPQSVLPNTVFEAVVKIPYDTQMKQVLANGKKGALNVGAVLILPEGFELAPPDRISPEIRQKMGNLYFQNYRPNQKNIIVIGPVPGQKYSELVFPILSPDPATDKEAHFLKYPIYLGGNRGRGQIYPDGSKSNNTVYSASATGRVSKILRKEKGGYEITIDNTSDGGQVVDIVPPGPELLISEGELIKVDQPLTNNPNVGGFGQGDAEIVLQDPLRVKGLLLFLASVILAQIFLVLKKKQFEKVQLAEMNL</sequence>